<reference key="1">
    <citation type="journal article" date="2016" name="Chem. Commun. (Camb.)">
        <title>Identification of genes encoding squalestatin S1 biosynthesis and in vitro production of new squalestatin analogues.</title>
        <authorList>
            <person name="Bonsch B."/>
            <person name="Belt V."/>
            <person name="Bartel C."/>
            <person name="Duensing N."/>
            <person name="Koziol M."/>
            <person name="Lazarus C.M."/>
            <person name="Bailey A.M."/>
            <person name="Simpson T.J."/>
            <person name="Cox R.J."/>
        </authorList>
    </citation>
    <scope>NUCLEOTIDE SEQUENCE [GENOMIC DNA]</scope>
    <scope>FUNCTION</scope>
    <scope>INDUCTION</scope>
</reference>
<reference key="2">
    <citation type="journal article" date="2001" name="Chem. Biol.">
        <title>Design and utility of oligonucleotide gene probes for fungal polyketide synthases.</title>
        <authorList>
            <person name="Nicholson T.P."/>
            <person name="Rudd B.A."/>
            <person name="Dawson M."/>
            <person name="Lazarus C.M."/>
            <person name="Simpson T.J."/>
            <person name="Cox R.J."/>
        </authorList>
    </citation>
    <scope>FUNCTION</scope>
</reference>
<reference key="3">
    <citation type="journal article" date="2004" name="Chem. Commun. (Camb.)">
        <title>Rapid cloning and expression of a fungal polyketide synthase gene involved in squalestatin biosynthesis.</title>
        <authorList>
            <person name="Cox R.J."/>
            <person name="Glod F."/>
            <person name="Hurley D."/>
            <person name="Lazarus C.M."/>
            <person name="Nicholson T.P."/>
            <person name="Rudd B.A."/>
            <person name="Simpson T.J."/>
            <person name="Wilkinson B."/>
            <person name="Zhang Y."/>
        </authorList>
    </citation>
    <scope>FUNCTION</scope>
</reference>
<reference key="4">
    <citation type="journal article" date="2017" name="Chem. Commun. (Camb.)">
        <title>In vitro kinetic study of the squalestatin tetraketide synthase dehydratase reveals the stereochemical course of a fungal highly reducing polyketide synthase.</title>
        <authorList>
            <person name="Liddle E."/>
            <person name="Scott A."/>
            <person name="Han L.C."/>
            <person name="Ivison D."/>
            <person name="Simpson T.J."/>
            <person name="Willis C.L."/>
            <person name="Cox R.J."/>
        </authorList>
    </citation>
    <scope>FUNCTION</scope>
</reference>
<protein>
    <recommendedName>
        <fullName evidence="11">Squalestatin hexaketide synthase</fullName>
        <shortName evidence="11">SQHKS</shortName>
        <ecNumber evidence="9">2.3.1.-</ecNumber>
    </recommendedName>
    <alternativeName>
        <fullName evidence="11">Highly reducing polyketide synthase 2</fullName>
        <shortName evidence="11">HR-PKS 2</shortName>
    </alternativeName>
    <alternativeName>
        <fullName evidence="11">Squalestatin S1 biosynthesis cluster protein pks2</fullName>
    </alternativeName>
</protein>
<dbReference type="EC" id="2.3.1.-" evidence="9"/>
<dbReference type="EMBL" id="KU946987">
    <property type="protein sequence ID" value="AMY15068.1"/>
    <property type="molecule type" value="Genomic_DNA"/>
</dbReference>
<dbReference type="SMR" id="A0A3G1DJF3"/>
<dbReference type="GO" id="GO:0004315">
    <property type="term" value="F:3-oxoacyl-[acyl-carrier-protein] synthase activity"/>
    <property type="evidence" value="ECO:0007669"/>
    <property type="project" value="InterPro"/>
</dbReference>
<dbReference type="GO" id="GO:0004312">
    <property type="term" value="F:fatty acid synthase activity"/>
    <property type="evidence" value="ECO:0007669"/>
    <property type="project" value="TreeGrafter"/>
</dbReference>
<dbReference type="GO" id="GO:0008168">
    <property type="term" value="F:methyltransferase activity"/>
    <property type="evidence" value="ECO:0007669"/>
    <property type="project" value="UniProtKB-KW"/>
</dbReference>
<dbReference type="GO" id="GO:0016491">
    <property type="term" value="F:oxidoreductase activity"/>
    <property type="evidence" value="ECO:0007669"/>
    <property type="project" value="UniProtKB-KW"/>
</dbReference>
<dbReference type="GO" id="GO:0031177">
    <property type="term" value="F:phosphopantetheine binding"/>
    <property type="evidence" value="ECO:0007669"/>
    <property type="project" value="InterPro"/>
</dbReference>
<dbReference type="GO" id="GO:0006633">
    <property type="term" value="P:fatty acid biosynthetic process"/>
    <property type="evidence" value="ECO:0007669"/>
    <property type="project" value="InterPro"/>
</dbReference>
<dbReference type="GO" id="GO:0032259">
    <property type="term" value="P:methylation"/>
    <property type="evidence" value="ECO:0007669"/>
    <property type="project" value="UniProtKB-KW"/>
</dbReference>
<dbReference type="GO" id="GO:0044550">
    <property type="term" value="P:secondary metabolite biosynthetic process"/>
    <property type="evidence" value="ECO:0007669"/>
    <property type="project" value="UniProtKB-ARBA"/>
</dbReference>
<dbReference type="CDD" id="cd02440">
    <property type="entry name" value="AdoMet_MTases"/>
    <property type="match status" value="1"/>
</dbReference>
<dbReference type="CDD" id="cd05195">
    <property type="entry name" value="enoyl_red"/>
    <property type="match status" value="1"/>
</dbReference>
<dbReference type="CDD" id="cd00833">
    <property type="entry name" value="PKS"/>
    <property type="match status" value="1"/>
</dbReference>
<dbReference type="FunFam" id="3.40.50.720:FF:000209">
    <property type="entry name" value="Polyketide synthase Pks12"/>
    <property type="match status" value="1"/>
</dbReference>
<dbReference type="Gene3D" id="3.40.47.10">
    <property type="match status" value="1"/>
</dbReference>
<dbReference type="Gene3D" id="1.10.1200.10">
    <property type="entry name" value="ACP-like"/>
    <property type="match status" value="1"/>
</dbReference>
<dbReference type="Gene3D" id="3.40.366.10">
    <property type="entry name" value="Malonyl-Coenzyme A Acyl Carrier Protein, domain 2"/>
    <property type="match status" value="1"/>
</dbReference>
<dbReference type="Gene3D" id="3.90.180.10">
    <property type="entry name" value="Medium-chain alcohol dehydrogenases, catalytic domain"/>
    <property type="match status" value="1"/>
</dbReference>
<dbReference type="Gene3D" id="3.40.50.720">
    <property type="entry name" value="NAD(P)-binding Rossmann-like Domain"/>
    <property type="match status" value="3"/>
</dbReference>
<dbReference type="Gene3D" id="3.10.129.110">
    <property type="entry name" value="Polyketide synthase dehydratase"/>
    <property type="match status" value="1"/>
</dbReference>
<dbReference type="Gene3D" id="3.40.50.150">
    <property type="entry name" value="Vaccinia Virus protein VP39"/>
    <property type="match status" value="1"/>
</dbReference>
<dbReference type="InterPro" id="IPR001227">
    <property type="entry name" value="Ac_transferase_dom_sf"/>
</dbReference>
<dbReference type="InterPro" id="IPR036736">
    <property type="entry name" value="ACP-like_sf"/>
</dbReference>
<dbReference type="InterPro" id="IPR014043">
    <property type="entry name" value="Acyl_transferase_dom"/>
</dbReference>
<dbReference type="InterPro" id="IPR016035">
    <property type="entry name" value="Acyl_Trfase/lysoPLipase"/>
</dbReference>
<dbReference type="InterPro" id="IPR013154">
    <property type="entry name" value="ADH-like_N"/>
</dbReference>
<dbReference type="InterPro" id="IPR011032">
    <property type="entry name" value="GroES-like_sf"/>
</dbReference>
<dbReference type="InterPro" id="IPR018201">
    <property type="entry name" value="Ketoacyl_synth_AS"/>
</dbReference>
<dbReference type="InterPro" id="IPR014031">
    <property type="entry name" value="Ketoacyl_synth_C"/>
</dbReference>
<dbReference type="InterPro" id="IPR014030">
    <property type="entry name" value="Ketoacyl_synth_N"/>
</dbReference>
<dbReference type="InterPro" id="IPR016036">
    <property type="entry name" value="Malonyl_transacylase_ACP-bd"/>
</dbReference>
<dbReference type="InterPro" id="IPR013217">
    <property type="entry name" value="Methyltransf_12"/>
</dbReference>
<dbReference type="InterPro" id="IPR036291">
    <property type="entry name" value="NAD(P)-bd_dom_sf"/>
</dbReference>
<dbReference type="InterPro" id="IPR056501">
    <property type="entry name" value="NAD-bd_HRPKS_sdrA"/>
</dbReference>
<dbReference type="InterPro" id="IPR032821">
    <property type="entry name" value="PKS_assoc"/>
</dbReference>
<dbReference type="InterPro" id="IPR020841">
    <property type="entry name" value="PKS_Beta-ketoAc_synthase_dom"/>
</dbReference>
<dbReference type="InterPro" id="IPR042104">
    <property type="entry name" value="PKS_dehydratase_sf"/>
</dbReference>
<dbReference type="InterPro" id="IPR020807">
    <property type="entry name" value="PKS_DH"/>
</dbReference>
<dbReference type="InterPro" id="IPR049551">
    <property type="entry name" value="PKS_DH_C"/>
</dbReference>
<dbReference type="InterPro" id="IPR049552">
    <property type="entry name" value="PKS_DH_N"/>
</dbReference>
<dbReference type="InterPro" id="IPR020843">
    <property type="entry name" value="PKS_ER"/>
</dbReference>
<dbReference type="InterPro" id="IPR013968">
    <property type="entry name" value="PKS_KR"/>
</dbReference>
<dbReference type="InterPro" id="IPR049900">
    <property type="entry name" value="PKS_mFAS_DH"/>
</dbReference>
<dbReference type="InterPro" id="IPR050091">
    <property type="entry name" value="PKS_NRPS_Biosynth_Enz"/>
</dbReference>
<dbReference type="InterPro" id="IPR020806">
    <property type="entry name" value="PKS_PP-bd"/>
</dbReference>
<dbReference type="InterPro" id="IPR009081">
    <property type="entry name" value="PP-bd_ACP"/>
</dbReference>
<dbReference type="InterPro" id="IPR029063">
    <property type="entry name" value="SAM-dependent_MTases_sf"/>
</dbReference>
<dbReference type="InterPro" id="IPR016039">
    <property type="entry name" value="Thiolase-like"/>
</dbReference>
<dbReference type="PANTHER" id="PTHR43775">
    <property type="entry name" value="FATTY ACID SYNTHASE"/>
    <property type="match status" value="1"/>
</dbReference>
<dbReference type="PANTHER" id="PTHR43775:SF49">
    <property type="entry name" value="SYNTHASE, PUTATIVE (JCVI)-RELATED"/>
    <property type="match status" value="1"/>
</dbReference>
<dbReference type="Pfam" id="PF00698">
    <property type="entry name" value="Acyl_transf_1"/>
    <property type="match status" value="1"/>
</dbReference>
<dbReference type="Pfam" id="PF08240">
    <property type="entry name" value="ADH_N"/>
    <property type="match status" value="1"/>
</dbReference>
<dbReference type="Pfam" id="PF13602">
    <property type="entry name" value="ADH_zinc_N_2"/>
    <property type="match status" value="1"/>
</dbReference>
<dbReference type="Pfam" id="PF16197">
    <property type="entry name" value="KAsynt_C_assoc"/>
    <property type="match status" value="1"/>
</dbReference>
<dbReference type="Pfam" id="PF00109">
    <property type="entry name" value="ketoacyl-synt"/>
    <property type="match status" value="1"/>
</dbReference>
<dbReference type="Pfam" id="PF02801">
    <property type="entry name" value="Ketoacyl-synt_C"/>
    <property type="match status" value="1"/>
</dbReference>
<dbReference type="Pfam" id="PF08659">
    <property type="entry name" value="KR"/>
    <property type="match status" value="1"/>
</dbReference>
<dbReference type="Pfam" id="PF08242">
    <property type="entry name" value="Methyltransf_12"/>
    <property type="match status" value="1"/>
</dbReference>
<dbReference type="Pfam" id="PF23114">
    <property type="entry name" value="NAD-bd_HRPKS_sdrA"/>
    <property type="match status" value="1"/>
</dbReference>
<dbReference type="Pfam" id="PF21089">
    <property type="entry name" value="PKS_DH_N"/>
    <property type="match status" value="1"/>
</dbReference>
<dbReference type="Pfam" id="PF14765">
    <property type="entry name" value="PS-DH"/>
    <property type="match status" value="1"/>
</dbReference>
<dbReference type="SMART" id="SM00827">
    <property type="entry name" value="PKS_AT"/>
    <property type="match status" value="1"/>
</dbReference>
<dbReference type="SMART" id="SM00826">
    <property type="entry name" value="PKS_DH"/>
    <property type="match status" value="1"/>
</dbReference>
<dbReference type="SMART" id="SM00829">
    <property type="entry name" value="PKS_ER"/>
    <property type="match status" value="1"/>
</dbReference>
<dbReference type="SMART" id="SM00822">
    <property type="entry name" value="PKS_KR"/>
    <property type="match status" value="1"/>
</dbReference>
<dbReference type="SMART" id="SM00825">
    <property type="entry name" value="PKS_KS"/>
    <property type="match status" value="1"/>
</dbReference>
<dbReference type="SMART" id="SM00823">
    <property type="entry name" value="PKS_PP"/>
    <property type="match status" value="1"/>
</dbReference>
<dbReference type="SUPFAM" id="SSF47336">
    <property type="entry name" value="ACP-like"/>
    <property type="match status" value="1"/>
</dbReference>
<dbReference type="SUPFAM" id="SSF52151">
    <property type="entry name" value="FabD/lysophospholipase-like"/>
    <property type="match status" value="1"/>
</dbReference>
<dbReference type="SUPFAM" id="SSF50129">
    <property type="entry name" value="GroES-like"/>
    <property type="match status" value="1"/>
</dbReference>
<dbReference type="SUPFAM" id="SSF51735">
    <property type="entry name" value="NAD(P)-binding Rossmann-fold domains"/>
    <property type="match status" value="2"/>
</dbReference>
<dbReference type="SUPFAM" id="SSF55048">
    <property type="entry name" value="Probable ACP-binding domain of malonyl-CoA ACP transacylase"/>
    <property type="match status" value="1"/>
</dbReference>
<dbReference type="SUPFAM" id="SSF53335">
    <property type="entry name" value="S-adenosyl-L-methionine-dependent methyltransferases"/>
    <property type="match status" value="1"/>
</dbReference>
<dbReference type="SUPFAM" id="SSF53901">
    <property type="entry name" value="Thiolase-like"/>
    <property type="match status" value="1"/>
</dbReference>
<dbReference type="PROSITE" id="PS50075">
    <property type="entry name" value="CARRIER"/>
    <property type="match status" value="1"/>
</dbReference>
<dbReference type="PROSITE" id="PS00606">
    <property type="entry name" value="KS3_1"/>
    <property type="match status" value="1"/>
</dbReference>
<dbReference type="PROSITE" id="PS52004">
    <property type="entry name" value="KS3_2"/>
    <property type="match status" value="1"/>
</dbReference>
<dbReference type="PROSITE" id="PS52019">
    <property type="entry name" value="PKS_MFAS_DH"/>
    <property type="match status" value="1"/>
</dbReference>
<comment type="function">
    <text evidence="1 7 8 9 10 12">Highly reducing polyketide synthase (HR-PKS); part of the gene cluster that mediates the biosynthesis of squalestatin S1 (SQS1, also known as zaragozic acid A), a heavily oxidized fungal polyketide that offers potent cholesterol lowering activity by targeting squalene synthase (SS) (PubMed:27056201). SQS1 is composed of a 2,8-dioxobicyclic[3.2.1]octane-3,4,5-tricarboxyclic acid core that is connected to two lipophilic polyketide arms (PubMed:27056201). These initial steps feature the priming of an unusual benzoic acid starter unit onto the highly reducing polyketide synthase pks2, followed by oxaloacetate extension and product release to generate a tricarboxylic acid containing product (By similarity). The phenylalanine ammonia lyase (PAL) M7 and the acyl-CoA ligase M9 are involved in transforming phenylalanine into benzoyl-CoA (By similarity). The citrate synthase-like protein R3 is involved in connecting the C-alpha-carbons of the hexaketide chain and oxaloacetate to afford the tricarboxylic acid unit (By similarity). The potential hydrolytic enzymes, M8 and M10, are in close proximity to pks2 and may participate in product release (By similarity). On the other side, the tetraketide arm is synthesized by a the squalestatin tetraketide synthase pks1 and enzymatically esterified to the core in the last biosynthetic step, by the acetyltransferase M4 (PubMed:11251290, PubMed:15489970, PubMed:28106181). The biosynthesis of the tetraketide must involve 3 rounds of chain extension (PubMed:11251290, PubMed:15489970, PubMed:28106181). After the first and second rounds methyl-transfer occurs, and in all rounds of extension the ketoreductase and dehydratase are active (PubMed:11251290, PubMed:15489970, PubMed:28106181). The enoyl reductase and C-MeT of pks1 are not active in the final round of extension (PubMed:11251290, PubMed:15489970, PubMed:28106181). The acetyltransferase M4 appears to have a broad substrate selectivity for its acyl CoA substrate, allowing the in vitro synthesis of novel squalestatins (Probable). The biosynthesis of SQS1 requires several oxidative steps likely performed by oxidoreductases M1, R1 and R2 (Probable). Finally, in support of the identification of the cluster as being responsible for SQS1 production, the cluster contains a gene encoding a putative squalene synthase (SS) R6, suggesting a likely mechanism for self-resistance (Probable).</text>
</comment>
<comment type="pathway">
    <text evidence="9">Secondary metabolite biosynthesis.</text>
</comment>
<comment type="induction">
    <text evidence="9">Expression is induced on squalestatin S1-producing YMG medium.</text>
</comment>
<comment type="domain">
    <text evidence="12">Multidomain protein; including a ketosynthase (KS) that catalyzes repeated decarboxylative condensation to elongate the polyketide backbone; a malonyl-CoA:ACP transacylase (MAT) that selects and transfers the extender unit malonyl-CoA; a dehydratase (DH) domain that reduces hydroxyl groups to enoyl groups; a methyltransferase (CMeT) domain responsible for the incorporation of methyl groups; an enoylreductase (ER) domain that reduces enoyl groups to alkyl group; a ketoreductase (KR) domain that catalyzes beta-ketoreduction steps; and an acyl-carrier protein (ACP) that serves as the tether of the growing and completed polyketide via its phosphopantetheinyl arm.</text>
</comment>
<name>SQHKS_PHOSM</name>
<accession>A0A3G1DJF3</accession>
<proteinExistence type="evidence at transcript level"/>
<sequence>MDVSKEEGQRANGFTNGNINETTNGHTNGYTNGHTNGHTNGTTNATTNGTTNGTMNGTTNGTTNRTTNGTTNITPEFEGKLPQVPVAICGIGVRLPGGVRSDSDLFQMLVDKRDARGIVPADRYNVKAYYDPRGRPGSILTEYGYYIDEDLAQMDASMFSMSNVELSMMDPAQRLLLEVTREAFEGAGEGDFRGKNIGTFVGDFTTDWQELQYADLIHTAPYQVIGGSDFVLSNRLAYEYNLTGPSASIKTACSATAEALHEALLAIRAGSCPSAIVAGANLILTPRGGIGMTAMGVLSPDGSCKTFDSSANGFARGDSVCAIYIKRLDLALRDGNPIRAVIRACDSNADGGGSGRTFGTPNPITHEALIRKTYADAGLDLHSTSVIECHGTGTPIGDPLEAEAVANCFADGVRPVYIGSVKPNLGHGEGGSAMASIIKAVVALENRTIIPNVKFNNPNPKIAWDKNLKVPTEPLPWPQDCQERMSINSFGLGGSNTHIIIDSAASFGIPSPENSLRETANSPNEAQTSILLMSANSPSSITAMSQRYSEYIQAHPDRVEDMAFTLATRRERLKQASYCIVDHGISSNPPPPMASSGVLQTAFIFTGQGAQWMGMGKELMQQQPAFAHSIREMDTVIKSLEYAPQWSLEGILLSDNDADKSALAQTDRAQPISTALQVALVDLLATWHVYPAAVVGHSSGEVAAAYAAGILTRREAIITAFYRGHACARCEIPGGMAAVGLGRTKVEPSLKTGVVIACENSNASVTISGDRSALEEVMADLREKYPTALVRKLQVPMGYHSHHMATVADLYKELVSPHLDPKAPQVPYFSTVYGRQVQEGKAFGPSYWQLNMESPVLFRTAVSEMLKEMGPNTAHLEVGPHSALAGPLRQIYEETGNSAPYASTMVRGQNSCTAFLEAIGKLFCFGLSPQIPSTKTRTVLPDIPTYPWDYKDKFWSETRVMSNWRFKKHRTHELLGERSLESSDIEPCWRNLLRTGTVPWLADHCVGSDIVFPAAGFIAMAGAAASQLAGSDGHYTVREVNIFSALVLHETTATELITTLRKQPLTSSLQSKWFEFSISSESNGVWTKYCSGLVTASVVISAGLPEMPDTKTFPRKVDTSRWYTTMSRIGLNYGRRFVGLEEISCSPVHQVASVQITDVQDDYEPYPLHPSTLDKFLQSWTLAFTKGEYRLLTQLYLPTFIEELSVSPAPRKKISGRTLASGIPGTTVGTSLGMVDDELVFSLRGFKCKRTDESFIQNVSKPRSMTLEWHLDTDFTDLHQLIRPTRDTAPENEILERLYLLYALENWDQLKDSTSSHPHLNIYLSWLAEEVKSFTEPGHPLISDSKELVSMDVPHRRREIAFLRQRSKHYPMAAAVEVYARTCARMVEIMEGKDNLLNVLLEDDLLAKFYNYYNDASDLSSFFQAAGLNKPHMRVLEIGAGTGGWTSHALRGLTSELGDRLYEEYTITDVSHGFLNQCKERFAAHSNIKYALLDISSDPLEQGFEEGYYDIVIASNVLHATPKLVETLSRCRKVLNPAGRLLIQEACAPGSRHGYIMGLFEGWWAGREDGRVRSPLMPVEEWDARLKLAGFEGAGTVVLDGQVPFYNYANIIAQPAPTTNVQPESRLTLMTSRPELDDFSATTKTMLEEAGYQLDVCSWGAELPSDQDVVFLVDTEASVPSLADENPENLATFLRYMKDISTSTVLWVTKPAQTACPDPRNGLITGMARTLRAELDMYIATLELDKLDRSAASAVLQVLRKLQDAARLEETQEKDEKSSDIKVDFEYALSDGELLIPRFHPFVVDQALLKDVPRADSRHLEIGQRGMLNTLHWVGDTLSALGSNEVELNMTAVGMNFLDLAVAMNIVDMSQSLGKGYNALGSEGSGIVTRVGSNVTNLKIGDRVATMGVDTSVFATKLQRPAGSCVRLPSGLSDEDAAGILVPYATVLWSFIEKARLKKGQTVLIHSAAGGVGIAAIHVARWIGAEIYTTVGAQAKVDFLVNELGVARDHIFHSRDDSFVKDVLSATKGKGIDVVLNSLSGELLHATWQCVAPGGCMLEIGKRDFLGRAQLAMHLFEENRAYFGIDLSRLALSEPEALQDLLQKTMDLLEKQQLQPLWPTNTFDAVAVEDAFRYMQRGVHMGRIVVRMPEDDSILPIAPMLPKPQFKADSTYLLTGGMGGLGRSIIRWMVSYGAKDITVVSRSAGNRDVDRALITEIGELGCTLRCFAADISDMDSLQNVLSSLTKPVAGVLHMAMVLRDVGTLNMDFDSWTAALRPKVQGTWNLHDKLSGSLDFFVLFSSISGTLGSYGQANYAAGNTFLDSFVRFRHGLGQPASVIDIAAIGDVGYVAETKDVAERIGRAFGSLGTEQEFLDTLQLAIARSTEVPEQQKLSSKTTKYSEPSQIVMHNKMIPPLSDPRNTTPWKSDARMAIYRNTEEAPQSANSQSKERLGLFLVSLSTDPDQLDEPETPVLFAQEIAKRVAAFLMKGDKDDDALDTSLTLSQMGADSLVAIEIRNWWKQTFGMEISTLELNSPGQTFDSLGRLATKRLKEAYLLKNSGS</sequence>
<feature type="chain" id="PRO_0000447826" description="Squalestatin hexaketide synthase">
    <location>
        <begin position="1"/>
        <end position="2561"/>
    </location>
</feature>
<feature type="domain" description="Ketosynthase family 3 (KS3)" evidence="4">
    <location>
        <begin position="83"/>
        <end position="503"/>
    </location>
</feature>
<feature type="domain" description="PKS/mFAS DH" evidence="5">
    <location>
        <begin position="972"/>
        <end position="1257"/>
    </location>
</feature>
<feature type="domain" description="Carrier" evidence="3">
    <location>
        <begin position="2472"/>
        <end position="2550"/>
    </location>
</feature>
<feature type="region of interest" description="Disordered" evidence="6">
    <location>
        <begin position="1"/>
        <end position="77"/>
    </location>
</feature>
<feature type="region of interest" description="Malonyl-CoA:ACP transacylase (MAT) domain" evidence="2">
    <location>
        <begin position="603"/>
        <end position="925"/>
    </location>
</feature>
<feature type="region of interest" description="Dehydratase (DH) domain" evidence="2">
    <location>
        <begin position="972"/>
        <end position="1253"/>
    </location>
</feature>
<feature type="region of interest" description="N-terminal hotdog fold" evidence="5">
    <location>
        <begin position="972"/>
        <end position="1101"/>
    </location>
</feature>
<feature type="region of interest" description="C-terminal hotdog fold" evidence="5">
    <location>
        <begin position="1112"/>
        <end position="1257"/>
    </location>
</feature>
<feature type="region of interest" description="Methyltransferase (CMet) domain" evidence="2">
    <location>
        <begin position="1421"/>
        <end position="1599"/>
    </location>
</feature>
<feature type="region of interest" description="Enoyl reductase (ER) (ER) domain" evidence="2">
    <location>
        <begin position="1826"/>
        <end position="2146"/>
    </location>
</feature>
<feature type="region of interest" description="Ketoreductase (KR) domain" evidence="2">
    <location>
        <begin position="2170"/>
        <end position="2343"/>
    </location>
</feature>
<feature type="compositionally biased region" description="Low complexity" evidence="6">
    <location>
        <begin position="20"/>
        <end position="74"/>
    </location>
</feature>
<feature type="active site" description="For beta-ketoacyl synthase activity" evidence="4">
    <location>
        <position position="253"/>
    </location>
</feature>
<feature type="active site" description="For beta-ketoacyl synthase activity" evidence="4">
    <location>
        <position position="390"/>
    </location>
</feature>
<feature type="active site" description="For beta-ketoacyl synthase activity" evidence="4">
    <location>
        <position position="427"/>
    </location>
</feature>
<feature type="active site" description="Proton acceptor; for dehydratase activity" evidence="5">
    <location>
        <position position="1004"/>
    </location>
</feature>
<feature type="active site" description="Proton donor; for dehydratase activity" evidence="5">
    <location>
        <position position="1174"/>
    </location>
</feature>
<feature type="modified residue" description="O-(pantetheine 4'-phosphoryl)serine" evidence="3">
    <location>
        <position position="2509"/>
    </location>
</feature>
<evidence type="ECO:0000250" key="1">
    <source>
        <dbReference type="UniProtKB" id="A0A345BJN0"/>
    </source>
</evidence>
<evidence type="ECO:0000255" key="2"/>
<evidence type="ECO:0000255" key="3">
    <source>
        <dbReference type="PROSITE-ProRule" id="PRU00258"/>
    </source>
</evidence>
<evidence type="ECO:0000255" key="4">
    <source>
        <dbReference type="PROSITE-ProRule" id="PRU01348"/>
    </source>
</evidence>
<evidence type="ECO:0000255" key="5">
    <source>
        <dbReference type="PROSITE-ProRule" id="PRU01363"/>
    </source>
</evidence>
<evidence type="ECO:0000256" key="6">
    <source>
        <dbReference type="SAM" id="MobiDB-lite"/>
    </source>
</evidence>
<evidence type="ECO:0000269" key="7">
    <source>
    </source>
</evidence>
<evidence type="ECO:0000269" key="8">
    <source>
    </source>
</evidence>
<evidence type="ECO:0000269" key="9">
    <source>
    </source>
</evidence>
<evidence type="ECO:0000269" key="10">
    <source>
    </source>
</evidence>
<evidence type="ECO:0000303" key="11">
    <source>
    </source>
</evidence>
<evidence type="ECO:0000305" key="12">
    <source>
    </source>
</evidence>
<gene>
    <name evidence="11" type="primary">pks2</name>
</gene>
<organism>
    <name type="scientific">Phoma sp. (strain ATCC 20986 / MF5453)</name>
    <dbReference type="NCBI Taxonomy" id="1828523"/>
    <lineage>
        <taxon>Eukaryota</taxon>
        <taxon>Fungi</taxon>
        <taxon>Dikarya</taxon>
        <taxon>Ascomycota</taxon>
        <taxon>Pezizomycotina</taxon>
        <taxon>Dothideomycetes</taxon>
        <taxon>Pleosporomycetidae</taxon>
        <taxon>Pleosporales</taxon>
        <taxon>Pleosporineae</taxon>
        <taxon>Didymellaceae</taxon>
        <taxon>Phoma</taxon>
    </lineage>
</organism>
<keyword id="KW-0012">Acyltransferase</keyword>
<keyword id="KW-0489">Methyltransferase</keyword>
<keyword id="KW-0511">Multifunctional enzyme</keyword>
<keyword id="KW-0521">NADP</keyword>
<keyword id="KW-0560">Oxidoreductase</keyword>
<keyword id="KW-0596">Phosphopantetheine</keyword>
<keyword id="KW-0597">Phosphoprotein</keyword>
<keyword id="KW-0808">Transferase</keyword>